<sequence length="265" mass="29029">MFPELNSLLGVTTDTLTLGKFTLLCDSNTDGSFLVHHFLSYYLRAGCRVCFVALVQSFSHYNIVAQKLGVNLSSAKDEGQLVFLEGLKSYTDLLFGDKSEAEETNPLCFLRAGSDLRPLYSFVSAALAPSAGQPWKCPVLILDDLSVLLSLGVTSLQVLDFMHYCRATVCTQYKGNVLCLVHGAEESGDEENELVLRSLSHQSHLILQAEGLSTGFCKDVHGQLKIIRGAVSSGKRGKNQPEIYQYKIQDKHVAFFARGLSAAVL</sequence>
<gene>
    <name type="primary">elp6</name>
    <name type="synonym">tmem103</name>
</gene>
<organism>
    <name type="scientific">Xenopus laevis</name>
    <name type="common">African clawed frog</name>
    <dbReference type="NCBI Taxonomy" id="8355"/>
    <lineage>
        <taxon>Eukaryota</taxon>
        <taxon>Metazoa</taxon>
        <taxon>Chordata</taxon>
        <taxon>Craniata</taxon>
        <taxon>Vertebrata</taxon>
        <taxon>Euteleostomi</taxon>
        <taxon>Amphibia</taxon>
        <taxon>Batrachia</taxon>
        <taxon>Anura</taxon>
        <taxon>Pipoidea</taxon>
        <taxon>Pipidae</taxon>
        <taxon>Xenopodinae</taxon>
        <taxon>Xenopus</taxon>
        <taxon>Xenopus</taxon>
    </lineage>
</organism>
<keyword id="KW-0963">Cytoplasm</keyword>
<keyword id="KW-0539">Nucleus</keyword>
<keyword id="KW-1185">Reference proteome</keyword>
<keyword id="KW-0819">tRNA processing</keyword>
<accession>Q0IHA2</accession>
<protein>
    <recommendedName>
        <fullName>Elongator complex protein 6</fullName>
    </recommendedName>
    <alternativeName>
        <fullName>Protein TMEM103</fullName>
    </alternativeName>
</protein>
<feature type="chain" id="PRO_0000274363" description="Elongator complex protein 6">
    <location>
        <begin position="1"/>
        <end position="265"/>
    </location>
</feature>
<comment type="function">
    <text evidence="1">Component of the elongator complex which is required for multiple tRNA modifications, including mcm5U (5-methoxycarbonylmethyl uridine), mcm5s2U (5-methoxycarbonylmethyl-2-thiouridine), and ncm5U (5-carbamoylmethyl uridine) (By similarity). The elongator complex catalyzes formation of carboxymethyluridine in the wobble base at position 34 in tRNAs (By similarity).</text>
</comment>
<comment type="pathway">
    <text evidence="1">tRNA modification; 5-methoxycarbonylmethyl-2-thiouridine-tRNA biosynthesis.</text>
</comment>
<comment type="subunit">
    <text evidence="1">Component of the elongator complex.</text>
</comment>
<comment type="subcellular location">
    <subcellularLocation>
        <location evidence="1">Cytoplasm</location>
    </subcellularLocation>
    <subcellularLocation>
        <location evidence="1">Nucleus</location>
    </subcellularLocation>
    <text evidence="1">Concentrates in the nucleus upon insulin stimulation.</text>
</comment>
<comment type="similarity">
    <text evidence="2">Belongs to the ELP6 family.</text>
</comment>
<comment type="caution">
    <text evidence="1">The elongator complex was originally thought to play a role in transcription elongation. However, it is no longer thought to play a direct role in this process and its primary function is thought to be in tRNA modification.</text>
</comment>
<name>ELP6_XENLA</name>
<reference key="1">
    <citation type="submission" date="2006-09" db="EMBL/GenBank/DDBJ databases">
        <authorList>
            <consortium name="NIH - Xenopus Gene Collection (XGC) project"/>
        </authorList>
    </citation>
    <scope>NUCLEOTIDE SEQUENCE [LARGE SCALE MRNA]</scope>
    <source>
        <tissue>Embryo</tissue>
    </source>
</reference>
<evidence type="ECO:0000250" key="1">
    <source>
        <dbReference type="UniProtKB" id="Q0PNE2"/>
    </source>
</evidence>
<evidence type="ECO:0000305" key="2"/>
<dbReference type="EMBL" id="BC123243">
    <property type="protein sequence ID" value="AAI23244.1"/>
    <property type="molecule type" value="mRNA"/>
</dbReference>
<dbReference type="RefSeq" id="NP_001090365.1">
    <property type="nucleotide sequence ID" value="NM_001096896.1"/>
</dbReference>
<dbReference type="SMR" id="Q0IHA2"/>
<dbReference type="BioGRID" id="607983">
    <property type="interactions" value="1"/>
</dbReference>
<dbReference type="IntAct" id="Q0IHA2">
    <property type="interactions" value="1"/>
</dbReference>
<dbReference type="DNASU" id="779276"/>
<dbReference type="GeneID" id="779276"/>
<dbReference type="KEGG" id="xla:779276"/>
<dbReference type="AGR" id="Xenbase:XB-GENE-5919932"/>
<dbReference type="CTD" id="779276"/>
<dbReference type="Xenbase" id="XB-GENE-5919932">
    <property type="gene designation" value="elp6.L"/>
</dbReference>
<dbReference type="OrthoDB" id="9995306at2759"/>
<dbReference type="UniPathway" id="UPA00988"/>
<dbReference type="Proteomes" id="UP000186698">
    <property type="component" value="Chromosome 6L"/>
</dbReference>
<dbReference type="Bgee" id="779276">
    <property type="expression patterns" value="Expressed in oocyte and 19 other cell types or tissues"/>
</dbReference>
<dbReference type="GO" id="GO:0005737">
    <property type="term" value="C:cytoplasm"/>
    <property type="evidence" value="ECO:0007669"/>
    <property type="project" value="UniProtKB-SubCell"/>
</dbReference>
<dbReference type="GO" id="GO:0033588">
    <property type="term" value="C:elongator holoenzyme complex"/>
    <property type="evidence" value="ECO:0000250"/>
    <property type="project" value="UniProtKB"/>
</dbReference>
<dbReference type="GO" id="GO:0005634">
    <property type="term" value="C:nucleus"/>
    <property type="evidence" value="ECO:0007669"/>
    <property type="project" value="UniProtKB-SubCell"/>
</dbReference>
<dbReference type="GO" id="GO:0030335">
    <property type="term" value="P:positive regulation of cell migration"/>
    <property type="evidence" value="ECO:0000250"/>
    <property type="project" value="UniProtKB"/>
</dbReference>
<dbReference type="GO" id="GO:0002098">
    <property type="term" value="P:tRNA wobble uridine modification"/>
    <property type="evidence" value="ECO:0007669"/>
    <property type="project" value="InterPro"/>
</dbReference>
<dbReference type="CDD" id="cd19495">
    <property type="entry name" value="Elp6"/>
    <property type="match status" value="1"/>
</dbReference>
<dbReference type="FunFam" id="3.40.50.300:FF:001078">
    <property type="entry name" value="Elongator acetyltransferase complex subunit 6"/>
    <property type="match status" value="1"/>
</dbReference>
<dbReference type="Gene3D" id="3.40.50.300">
    <property type="entry name" value="P-loop containing nucleotide triphosphate hydrolases"/>
    <property type="match status" value="1"/>
</dbReference>
<dbReference type="InterPro" id="IPR018627">
    <property type="entry name" value="ELP6"/>
</dbReference>
<dbReference type="InterPro" id="IPR027417">
    <property type="entry name" value="P-loop_NTPase"/>
</dbReference>
<dbReference type="PANTHER" id="PTHR16184">
    <property type="entry name" value="ELONGATOR COMPLEX PROTEIN 6"/>
    <property type="match status" value="1"/>
</dbReference>
<dbReference type="PANTHER" id="PTHR16184:SF6">
    <property type="entry name" value="ELONGATOR COMPLEX PROTEIN 6"/>
    <property type="match status" value="1"/>
</dbReference>
<dbReference type="Pfam" id="PF09807">
    <property type="entry name" value="ELP6"/>
    <property type="match status" value="1"/>
</dbReference>
<proteinExistence type="evidence at transcript level"/>